<name>ACCA_XANCP</name>
<gene>
    <name evidence="1" type="primary">accA</name>
    <name type="ordered locus">XCC1357</name>
</gene>
<protein>
    <recommendedName>
        <fullName evidence="1">Acetyl-coenzyme A carboxylase carboxyl transferase subunit alpha</fullName>
        <shortName evidence="1">ACCase subunit alpha</shortName>
        <shortName evidence="1">Acetyl-CoA carboxylase carboxyltransferase subunit alpha</shortName>
        <ecNumber evidence="1">2.1.3.15</ecNumber>
    </recommendedName>
</protein>
<accession>Q8PAW9</accession>
<comment type="function">
    <text evidence="1">Component of the acetyl coenzyme A carboxylase (ACC) complex. First, biotin carboxylase catalyzes the carboxylation of biotin on its carrier protein (BCCP) and then the CO(2) group is transferred by the carboxyltransferase to acetyl-CoA to form malonyl-CoA.</text>
</comment>
<comment type="catalytic activity">
    <reaction evidence="1">
        <text>N(6)-carboxybiotinyl-L-lysyl-[protein] + acetyl-CoA = N(6)-biotinyl-L-lysyl-[protein] + malonyl-CoA</text>
        <dbReference type="Rhea" id="RHEA:54728"/>
        <dbReference type="Rhea" id="RHEA-COMP:10505"/>
        <dbReference type="Rhea" id="RHEA-COMP:10506"/>
        <dbReference type="ChEBI" id="CHEBI:57288"/>
        <dbReference type="ChEBI" id="CHEBI:57384"/>
        <dbReference type="ChEBI" id="CHEBI:83144"/>
        <dbReference type="ChEBI" id="CHEBI:83145"/>
        <dbReference type="EC" id="2.1.3.15"/>
    </reaction>
</comment>
<comment type="pathway">
    <text evidence="1">Lipid metabolism; malonyl-CoA biosynthesis; malonyl-CoA from acetyl-CoA: step 1/1.</text>
</comment>
<comment type="subunit">
    <text evidence="1">Acetyl-CoA carboxylase is a heterohexamer composed of biotin carboxyl carrier protein (AccB), biotin carboxylase (AccC) and two subunits each of ACCase subunit alpha (AccA) and ACCase subunit beta (AccD).</text>
</comment>
<comment type="subcellular location">
    <subcellularLocation>
        <location evidence="1">Cytoplasm</location>
    </subcellularLocation>
</comment>
<comment type="similarity">
    <text evidence="1">Belongs to the AccA family.</text>
</comment>
<evidence type="ECO:0000255" key="1">
    <source>
        <dbReference type="HAMAP-Rule" id="MF_00823"/>
    </source>
</evidence>
<evidence type="ECO:0000255" key="2">
    <source>
        <dbReference type="PROSITE-ProRule" id="PRU01137"/>
    </source>
</evidence>
<dbReference type="EC" id="2.1.3.15" evidence="1"/>
<dbReference type="EMBL" id="AE008922">
    <property type="protein sequence ID" value="AAM40655.1"/>
    <property type="molecule type" value="Genomic_DNA"/>
</dbReference>
<dbReference type="RefSeq" id="NP_636731.1">
    <property type="nucleotide sequence ID" value="NC_003902.1"/>
</dbReference>
<dbReference type="RefSeq" id="WP_011036549.1">
    <property type="nucleotide sequence ID" value="NC_003902.1"/>
</dbReference>
<dbReference type="SMR" id="Q8PAW9"/>
<dbReference type="STRING" id="190485.XCC1357"/>
<dbReference type="EnsemblBacteria" id="AAM40655">
    <property type="protein sequence ID" value="AAM40655"/>
    <property type="gene ID" value="XCC1357"/>
</dbReference>
<dbReference type="KEGG" id="xcc:XCC1357"/>
<dbReference type="PATRIC" id="fig|190485.4.peg.1459"/>
<dbReference type="eggNOG" id="COG0825">
    <property type="taxonomic scope" value="Bacteria"/>
</dbReference>
<dbReference type="HOGENOM" id="CLU_015486_0_2_6"/>
<dbReference type="OrthoDB" id="9808023at2"/>
<dbReference type="UniPathway" id="UPA00655">
    <property type="reaction ID" value="UER00711"/>
</dbReference>
<dbReference type="Proteomes" id="UP000001010">
    <property type="component" value="Chromosome"/>
</dbReference>
<dbReference type="GO" id="GO:0009317">
    <property type="term" value="C:acetyl-CoA carboxylase complex"/>
    <property type="evidence" value="ECO:0007669"/>
    <property type="project" value="InterPro"/>
</dbReference>
<dbReference type="GO" id="GO:0003989">
    <property type="term" value="F:acetyl-CoA carboxylase activity"/>
    <property type="evidence" value="ECO:0007669"/>
    <property type="project" value="InterPro"/>
</dbReference>
<dbReference type="GO" id="GO:0005524">
    <property type="term" value="F:ATP binding"/>
    <property type="evidence" value="ECO:0007669"/>
    <property type="project" value="UniProtKB-KW"/>
</dbReference>
<dbReference type="GO" id="GO:0016743">
    <property type="term" value="F:carboxyl- or carbamoyltransferase activity"/>
    <property type="evidence" value="ECO:0007669"/>
    <property type="project" value="UniProtKB-UniRule"/>
</dbReference>
<dbReference type="GO" id="GO:0006633">
    <property type="term" value="P:fatty acid biosynthetic process"/>
    <property type="evidence" value="ECO:0007669"/>
    <property type="project" value="UniProtKB-KW"/>
</dbReference>
<dbReference type="GO" id="GO:2001295">
    <property type="term" value="P:malonyl-CoA biosynthetic process"/>
    <property type="evidence" value="ECO:0007669"/>
    <property type="project" value="UniProtKB-UniRule"/>
</dbReference>
<dbReference type="FunFam" id="3.90.226.10:FF:000008">
    <property type="entry name" value="Acetyl-coenzyme A carboxylase carboxyl transferase subunit alpha"/>
    <property type="match status" value="1"/>
</dbReference>
<dbReference type="Gene3D" id="3.90.226.10">
    <property type="entry name" value="2-enoyl-CoA Hydratase, Chain A, domain 1"/>
    <property type="match status" value="1"/>
</dbReference>
<dbReference type="HAMAP" id="MF_00823">
    <property type="entry name" value="AcetylCoA_CT_alpha"/>
    <property type="match status" value="1"/>
</dbReference>
<dbReference type="InterPro" id="IPR001095">
    <property type="entry name" value="Acetyl_CoA_COase_a_su"/>
</dbReference>
<dbReference type="InterPro" id="IPR029045">
    <property type="entry name" value="ClpP/crotonase-like_dom_sf"/>
</dbReference>
<dbReference type="InterPro" id="IPR011763">
    <property type="entry name" value="COA_CT_C"/>
</dbReference>
<dbReference type="NCBIfam" id="TIGR00513">
    <property type="entry name" value="accA"/>
    <property type="match status" value="1"/>
</dbReference>
<dbReference type="NCBIfam" id="NF041504">
    <property type="entry name" value="AccA_sub"/>
    <property type="match status" value="1"/>
</dbReference>
<dbReference type="NCBIfam" id="NF004344">
    <property type="entry name" value="PRK05724.1"/>
    <property type="match status" value="1"/>
</dbReference>
<dbReference type="PANTHER" id="PTHR42853">
    <property type="entry name" value="ACETYL-COENZYME A CARBOXYLASE CARBOXYL TRANSFERASE SUBUNIT ALPHA"/>
    <property type="match status" value="1"/>
</dbReference>
<dbReference type="PANTHER" id="PTHR42853:SF3">
    <property type="entry name" value="ACETYL-COENZYME A CARBOXYLASE CARBOXYL TRANSFERASE SUBUNIT ALPHA, CHLOROPLASTIC"/>
    <property type="match status" value="1"/>
</dbReference>
<dbReference type="Pfam" id="PF03255">
    <property type="entry name" value="ACCA"/>
    <property type="match status" value="1"/>
</dbReference>
<dbReference type="PRINTS" id="PR01069">
    <property type="entry name" value="ACCCTRFRASEA"/>
</dbReference>
<dbReference type="SUPFAM" id="SSF52096">
    <property type="entry name" value="ClpP/crotonase"/>
    <property type="match status" value="1"/>
</dbReference>
<dbReference type="PROSITE" id="PS50989">
    <property type="entry name" value="COA_CT_CTER"/>
    <property type="match status" value="1"/>
</dbReference>
<proteinExistence type="inferred from homology"/>
<sequence length="319" mass="35200">MNPNYLDFEQPIADLEAKIQELRKASTGPAVNVDAEVRALRDKLRVRTAQIFRDLSAWQVSQLARHPQRPYTLDYINTMCDEFQELAGDRAYADDKAIVGGLGRIDGRPVVIIGHQKGRDTKSKVARNFGMPRPEGYRKALRLMKLAERFRLPLLTFIDTPGAYPGIGAEERGQSEAIARNLMEMAELKVPVICTVIGEGGSGGALAIGVGDRTLMLEYGTYSVISPEGCASILWKDAAKAKDAAEQLGLTAKRLKGLGLVDKVIREPTGGAHRNPEQMGKRLKAVLLNELDALEKVPVDALMQQRYERLRSYGAYEGH</sequence>
<reference key="1">
    <citation type="journal article" date="2002" name="Nature">
        <title>Comparison of the genomes of two Xanthomonas pathogens with differing host specificities.</title>
        <authorList>
            <person name="da Silva A.C.R."/>
            <person name="Ferro J.A."/>
            <person name="Reinach F.C."/>
            <person name="Farah C.S."/>
            <person name="Furlan L.R."/>
            <person name="Quaggio R.B."/>
            <person name="Monteiro-Vitorello C.B."/>
            <person name="Van Sluys M.A."/>
            <person name="Almeida N.F. Jr."/>
            <person name="Alves L.M.C."/>
            <person name="do Amaral A.M."/>
            <person name="Bertolini M.C."/>
            <person name="Camargo L.E.A."/>
            <person name="Camarotte G."/>
            <person name="Cannavan F."/>
            <person name="Cardozo J."/>
            <person name="Chambergo F."/>
            <person name="Ciapina L.P."/>
            <person name="Cicarelli R.M.B."/>
            <person name="Coutinho L.L."/>
            <person name="Cursino-Santos J.R."/>
            <person name="El-Dorry H."/>
            <person name="Faria J.B."/>
            <person name="Ferreira A.J.S."/>
            <person name="Ferreira R.C.C."/>
            <person name="Ferro M.I.T."/>
            <person name="Formighieri E.F."/>
            <person name="Franco M.C."/>
            <person name="Greggio C.C."/>
            <person name="Gruber A."/>
            <person name="Katsuyama A.M."/>
            <person name="Kishi L.T."/>
            <person name="Leite R.P."/>
            <person name="Lemos E.G.M."/>
            <person name="Lemos M.V.F."/>
            <person name="Locali E.C."/>
            <person name="Machado M.A."/>
            <person name="Madeira A.M.B.N."/>
            <person name="Martinez-Rossi N.M."/>
            <person name="Martins E.C."/>
            <person name="Meidanis J."/>
            <person name="Menck C.F.M."/>
            <person name="Miyaki C.Y."/>
            <person name="Moon D.H."/>
            <person name="Moreira L.M."/>
            <person name="Novo M.T.M."/>
            <person name="Okura V.K."/>
            <person name="Oliveira M.C."/>
            <person name="Oliveira V.R."/>
            <person name="Pereira H.A."/>
            <person name="Rossi A."/>
            <person name="Sena J.A.D."/>
            <person name="Silva C."/>
            <person name="de Souza R.F."/>
            <person name="Spinola L.A.F."/>
            <person name="Takita M.A."/>
            <person name="Tamura R.E."/>
            <person name="Teixeira E.C."/>
            <person name="Tezza R.I.D."/>
            <person name="Trindade dos Santos M."/>
            <person name="Truffi D."/>
            <person name="Tsai S.M."/>
            <person name="White F.F."/>
            <person name="Setubal J.C."/>
            <person name="Kitajima J.P."/>
        </authorList>
    </citation>
    <scope>NUCLEOTIDE SEQUENCE [LARGE SCALE GENOMIC DNA]</scope>
    <source>
        <strain>ATCC 33913 / DSM 3586 / NCPPB 528 / LMG 568 / P 25</strain>
    </source>
</reference>
<feature type="chain" id="PRO_0000223855" description="Acetyl-coenzyme A carboxylase carboxyl transferase subunit alpha">
    <location>
        <begin position="1"/>
        <end position="319"/>
    </location>
</feature>
<feature type="domain" description="CoA carboxyltransferase C-terminal" evidence="2">
    <location>
        <begin position="32"/>
        <end position="293"/>
    </location>
</feature>
<keyword id="KW-0067">ATP-binding</keyword>
<keyword id="KW-0963">Cytoplasm</keyword>
<keyword id="KW-0275">Fatty acid biosynthesis</keyword>
<keyword id="KW-0276">Fatty acid metabolism</keyword>
<keyword id="KW-0444">Lipid biosynthesis</keyword>
<keyword id="KW-0443">Lipid metabolism</keyword>
<keyword id="KW-0547">Nucleotide-binding</keyword>
<keyword id="KW-1185">Reference proteome</keyword>
<keyword id="KW-0808">Transferase</keyword>
<organism>
    <name type="scientific">Xanthomonas campestris pv. campestris (strain ATCC 33913 / DSM 3586 / NCPPB 528 / LMG 568 / P 25)</name>
    <dbReference type="NCBI Taxonomy" id="190485"/>
    <lineage>
        <taxon>Bacteria</taxon>
        <taxon>Pseudomonadati</taxon>
        <taxon>Pseudomonadota</taxon>
        <taxon>Gammaproteobacteria</taxon>
        <taxon>Lysobacterales</taxon>
        <taxon>Lysobacteraceae</taxon>
        <taxon>Xanthomonas</taxon>
    </lineage>
</organism>